<reference key="1">
    <citation type="journal article" date="2001" name="Science">
        <title>Mechanisms of evolution in Rickettsia conorii and R. prowazekii.</title>
        <authorList>
            <person name="Ogata H."/>
            <person name="Audic S."/>
            <person name="Renesto-Audiffren P."/>
            <person name="Fournier P.-E."/>
            <person name="Barbe V."/>
            <person name="Samson D."/>
            <person name="Roux V."/>
            <person name="Cossart P."/>
            <person name="Weissenbach J."/>
            <person name="Claverie J.-M."/>
            <person name="Raoult D."/>
        </authorList>
    </citation>
    <scope>NUCLEOTIDE SEQUENCE [LARGE SCALE GENOMIC DNA]</scope>
    <source>
        <strain>ATCC VR-613 / Malish 7</strain>
    </source>
</reference>
<comment type="function">
    <text evidence="1">This protein binds to 23S rRNA in the presence of protein L20.</text>
</comment>
<comment type="subunit">
    <text evidence="1">Part of the 50S ribosomal subunit. Contacts protein L20.</text>
</comment>
<comment type="similarity">
    <text evidence="1">Belongs to the bacterial ribosomal protein bL21 family.</text>
</comment>
<gene>
    <name evidence="1" type="primary">rplU</name>
    <name type="ordered locus">RC1162</name>
</gene>
<organism>
    <name type="scientific">Rickettsia conorii (strain ATCC VR-613 / Malish 7)</name>
    <dbReference type="NCBI Taxonomy" id="272944"/>
    <lineage>
        <taxon>Bacteria</taxon>
        <taxon>Pseudomonadati</taxon>
        <taxon>Pseudomonadota</taxon>
        <taxon>Alphaproteobacteria</taxon>
        <taxon>Rickettsiales</taxon>
        <taxon>Rickettsiaceae</taxon>
        <taxon>Rickettsieae</taxon>
        <taxon>Rickettsia</taxon>
        <taxon>spotted fever group</taxon>
    </lineage>
</organism>
<sequence>MFAVIKAGGKQYKVDRNSIIKVEKIDGELGSKIQFDQILMIGEYSKPSFIGTPIVKGAVVTAEITNQLKDNKIIVFKKKRRKNYRRKAGHRQELTELKILDITKQ</sequence>
<dbReference type="EMBL" id="AE006914">
    <property type="protein sequence ID" value="AAL03700.1"/>
    <property type="molecule type" value="Genomic_DNA"/>
</dbReference>
<dbReference type="PIR" id="B97845">
    <property type="entry name" value="B97845"/>
</dbReference>
<dbReference type="RefSeq" id="WP_004997480.1">
    <property type="nucleotide sequence ID" value="NC_003103.1"/>
</dbReference>
<dbReference type="SMR" id="Q92GG1"/>
<dbReference type="GeneID" id="95361581"/>
<dbReference type="KEGG" id="rco:RC1162"/>
<dbReference type="HOGENOM" id="CLU_061463_3_2_5"/>
<dbReference type="Proteomes" id="UP000000816">
    <property type="component" value="Chromosome"/>
</dbReference>
<dbReference type="GO" id="GO:0005737">
    <property type="term" value="C:cytoplasm"/>
    <property type="evidence" value="ECO:0007669"/>
    <property type="project" value="UniProtKB-ARBA"/>
</dbReference>
<dbReference type="GO" id="GO:1990904">
    <property type="term" value="C:ribonucleoprotein complex"/>
    <property type="evidence" value="ECO:0007669"/>
    <property type="project" value="UniProtKB-KW"/>
</dbReference>
<dbReference type="GO" id="GO:0005840">
    <property type="term" value="C:ribosome"/>
    <property type="evidence" value="ECO:0007669"/>
    <property type="project" value="UniProtKB-KW"/>
</dbReference>
<dbReference type="GO" id="GO:0019843">
    <property type="term" value="F:rRNA binding"/>
    <property type="evidence" value="ECO:0007669"/>
    <property type="project" value="UniProtKB-UniRule"/>
</dbReference>
<dbReference type="GO" id="GO:0003735">
    <property type="term" value="F:structural constituent of ribosome"/>
    <property type="evidence" value="ECO:0007669"/>
    <property type="project" value="InterPro"/>
</dbReference>
<dbReference type="GO" id="GO:0006412">
    <property type="term" value="P:translation"/>
    <property type="evidence" value="ECO:0007669"/>
    <property type="project" value="UniProtKB-UniRule"/>
</dbReference>
<dbReference type="HAMAP" id="MF_01363">
    <property type="entry name" value="Ribosomal_bL21"/>
    <property type="match status" value="1"/>
</dbReference>
<dbReference type="InterPro" id="IPR028909">
    <property type="entry name" value="bL21-like"/>
</dbReference>
<dbReference type="InterPro" id="IPR036164">
    <property type="entry name" value="bL21-like_sf"/>
</dbReference>
<dbReference type="InterPro" id="IPR001787">
    <property type="entry name" value="Ribosomal_bL21"/>
</dbReference>
<dbReference type="InterPro" id="IPR018258">
    <property type="entry name" value="Ribosomal_bL21_CS"/>
</dbReference>
<dbReference type="NCBIfam" id="TIGR00061">
    <property type="entry name" value="L21"/>
    <property type="match status" value="1"/>
</dbReference>
<dbReference type="PANTHER" id="PTHR21349">
    <property type="entry name" value="50S RIBOSOMAL PROTEIN L21"/>
    <property type="match status" value="1"/>
</dbReference>
<dbReference type="PANTHER" id="PTHR21349:SF0">
    <property type="entry name" value="LARGE RIBOSOMAL SUBUNIT PROTEIN BL21M"/>
    <property type="match status" value="1"/>
</dbReference>
<dbReference type="Pfam" id="PF00829">
    <property type="entry name" value="Ribosomal_L21p"/>
    <property type="match status" value="1"/>
</dbReference>
<dbReference type="SUPFAM" id="SSF141091">
    <property type="entry name" value="L21p-like"/>
    <property type="match status" value="1"/>
</dbReference>
<dbReference type="PROSITE" id="PS01169">
    <property type="entry name" value="RIBOSOMAL_L21"/>
    <property type="match status" value="1"/>
</dbReference>
<keyword id="KW-0687">Ribonucleoprotein</keyword>
<keyword id="KW-0689">Ribosomal protein</keyword>
<keyword id="KW-0694">RNA-binding</keyword>
<keyword id="KW-0699">rRNA-binding</keyword>
<name>RL21_RICCN</name>
<proteinExistence type="inferred from homology"/>
<accession>Q92GG1</accession>
<feature type="chain" id="PRO_0000270729" description="Large ribosomal subunit protein bL21">
    <location>
        <begin position="1"/>
        <end position="105"/>
    </location>
</feature>
<evidence type="ECO:0000255" key="1">
    <source>
        <dbReference type="HAMAP-Rule" id="MF_01363"/>
    </source>
</evidence>
<evidence type="ECO:0000305" key="2"/>
<protein>
    <recommendedName>
        <fullName evidence="1">Large ribosomal subunit protein bL21</fullName>
    </recommendedName>
    <alternativeName>
        <fullName evidence="2">50S ribosomal protein L21</fullName>
    </alternativeName>
</protein>